<feature type="chain" id="PRO_1000074567" description="Phospho-N-acetylmuramoyl-pentapeptide-transferase">
    <location>
        <begin position="1"/>
        <end position="327"/>
    </location>
</feature>
<feature type="transmembrane region" description="Helical" evidence="1">
    <location>
        <begin position="3"/>
        <end position="23"/>
    </location>
</feature>
<feature type="transmembrane region" description="Helical" evidence="1">
    <location>
        <begin position="51"/>
        <end position="71"/>
    </location>
</feature>
<feature type="transmembrane region" description="Helical" evidence="1">
    <location>
        <begin position="79"/>
        <end position="99"/>
    </location>
</feature>
<feature type="transmembrane region" description="Helical" evidence="1">
    <location>
        <begin position="115"/>
        <end position="135"/>
    </location>
</feature>
<feature type="transmembrane region" description="Helical" evidence="1">
    <location>
        <begin position="140"/>
        <end position="160"/>
    </location>
</feature>
<feature type="transmembrane region" description="Helical" evidence="1">
    <location>
        <begin position="172"/>
        <end position="192"/>
    </location>
</feature>
<feature type="transmembrane region" description="Helical" evidence="1">
    <location>
        <begin position="197"/>
        <end position="217"/>
    </location>
</feature>
<feature type="transmembrane region" description="Helical" evidence="1">
    <location>
        <begin position="223"/>
        <end position="243"/>
    </location>
</feature>
<feature type="transmembrane region" description="Helical" evidence="1">
    <location>
        <begin position="248"/>
        <end position="268"/>
    </location>
</feature>
<feature type="transmembrane region" description="Helical" evidence="1">
    <location>
        <begin position="306"/>
        <end position="326"/>
    </location>
</feature>
<reference key="1">
    <citation type="journal article" date="2007" name="J. Bacteriol.">
        <title>Genome-wide transcriptional changes in Streptococcus gordonii in response to competence signaling peptide.</title>
        <authorList>
            <person name="Vickerman M.M."/>
            <person name="Iobst S."/>
            <person name="Jesionowski A.M."/>
            <person name="Gill S.R."/>
        </authorList>
    </citation>
    <scope>NUCLEOTIDE SEQUENCE [LARGE SCALE GENOMIC DNA]</scope>
    <source>
        <strain>Challis / ATCC 35105 / BCRC 15272 / CH1 / DL1 / V288</strain>
    </source>
</reference>
<protein>
    <recommendedName>
        <fullName evidence="1">Phospho-N-acetylmuramoyl-pentapeptide-transferase</fullName>
        <ecNumber evidence="1">2.7.8.13</ecNumber>
    </recommendedName>
    <alternativeName>
        <fullName evidence="1">UDP-MurNAc-pentapeptide phosphotransferase</fullName>
    </alternativeName>
</protein>
<proteinExistence type="inferred from homology"/>
<dbReference type="EC" id="2.7.8.13" evidence="1"/>
<dbReference type="EMBL" id="CP000725">
    <property type="protein sequence ID" value="ABV10526.1"/>
    <property type="molecule type" value="Genomic_DNA"/>
</dbReference>
<dbReference type="RefSeq" id="WP_012000072.1">
    <property type="nucleotide sequence ID" value="NC_009785.1"/>
</dbReference>
<dbReference type="SMR" id="A8AVT2"/>
<dbReference type="STRING" id="467705.SGO_0576"/>
<dbReference type="KEGG" id="sgo:SGO_0576"/>
<dbReference type="eggNOG" id="COG0472">
    <property type="taxonomic scope" value="Bacteria"/>
</dbReference>
<dbReference type="HOGENOM" id="CLU_023982_0_1_9"/>
<dbReference type="UniPathway" id="UPA00219"/>
<dbReference type="Proteomes" id="UP000001131">
    <property type="component" value="Chromosome"/>
</dbReference>
<dbReference type="GO" id="GO:0005886">
    <property type="term" value="C:plasma membrane"/>
    <property type="evidence" value="ECO:0007669"/>
    <property type="project" value="UniProtKB-SubCell"/>
</dbReference>
<dbReference type="GO" id="GO:0046872">
    <property type="term" value="F:metal ion binding"/>
    <property type="evidence" value="ECO:0007669"/>
    <property type="project" value="UniProtKB-KW"/>
</dbReference>
<dbReference type="GO" id="GO:0008963">
    <property type="term" value="F:phospho-N-acetylmuramoyl-pentapeptide-transferase activity"/>
    <property type="evidence" value="ECO:0007669"/>
    <property type="project" value="UniProtKB-UniRule"/>
</dbReference>
<dbReference type="GO" id="GO:0051301">
    <property type="term" value="P:cell division"/>
    <property type="evidence" value="ECO:0007669"/>
    <property type="project" value="UniProtKB-KW"/>
</dbReference>
<dbReference type="GO" id="GO:0071555">
    <property type="term" value="P:cell wall organization"/>
    <property type="evidence" value="ECO:0007669"/>
    <property type="project" value="UniProtKB-KW"/>
</dbReference>
<dbReference type="GO" id="GO:0009252">
    <property type="term" value="P:peptidoglycan biosynthetic process"/>
    <property type="evidence" value="ECO:0007669"/>
    <property type="project" value="UniProtKB-UniRule"/>
</dbReference>
<dbReference type="GO" id="GO:0008360">
    <property type="term" value="P:regulation of cell shape"/>
    <property type="evidence" value="ECO:0007669"/>
    <property type="project" value="UniProtKB-KW"/>
</dbReference>
<dbReference type="CDD" id="cd06852">
    <property type="entry name" value="GT_MraY"/>
    <property type="match status" value="1"/>
</dbReference>
<dbReference type="HAMAP" id="MF_00038">
    <property type="entry name" value="MraY"/>
    <property type="match status" value="1"/>
</dbReference>
<dbReference type="InterPro" id="IPR000715">
    <property type="entry name" value="Glycosyl_transferase_4"/>
</dbReference>
<dbReference type="InterPro" id="IPR003524">
    <property type="entry name" value="PNAcMuramoyl-5peptid_Trfase"/>
</dbReference>
<dbReference type="InterPro" id="IPR018480">
    <property type="entry name" value="PNAcMuramoyl-5peptid_Trfase_CS"/>
</dbReference>
<dbReference type="NCBIfam" id="TIGR00445">
    <property type="entry name" value="mraY"/>
    <property type="match status" value="1"/>
</dbReference>
<dbReference type="PANTHER" id="PTHR22926">
    <property type="entry name" value="PHOSPHO-N-ACETYLMURAMOYL-PENTAPEPTIDE-TRANSFERASE"/>
    <property type="match status" value="1"/>
</dbReference>
<dbReference type="PANTHER" id="PTHR22926:SF5">
    <property type="entry name" value="PHOSPHO-N-ACETYLMURAMOYL-PENTAPEPTIDE-TRANSFERASE HOMOLOG"/>
    <property type="match status" value="1"/>
</dbReference>
<dbReference type="Pfam" id="PF00953">
    <property type="entry name" value="Glycos_transf_4"/>
    <property type="match status" value="1"/>
</dbReference>
<dbReference type="Pfam" id="PF10555">
    <property type="entry name" value="MraY_sig1"/>
    <property type="match status" value="1"/>
</dbReference>
<dbReference type="PROSITE" id="PS01348">
    <property type="entry name" value="MRAY_2"/>
    <property type="match status" value="1"/>
</dbReference>
<accession>A8AVT2</accession>
<evidence type="ECO:0000255" key="1">
    <source>
        <dbReference type="HAMAP-Rule" id="MF_00038"/>
    </source>
</evidence>
<gene>
    <name evidence="1" type="primary">mraY</name>
    <name type="ordered locus">SGO_0576</name>
</gene>
<keyword id="KW-0131">Cell cycle</keyword>
<keyword id="KW-0132">Cell division</keyword>
<keyword id="KW-1003">Cell membrane</keyword>
<keyword id="KW-0133">Cell shape</keyword>
<keyword id="KW-0961">Cell wall biogenesis/degradation</keyword>
<keyword id="KW-0460">Magnesium</keyword>
<keyword id="KW-0472">Membrane</keyword>
<keyword id="KW-0479">Metal-binding</keyword>
<keyword id="KW-0573">Peptidoglycan synthesis</keyword>
<keyword id="KW-1185">Reference proteome</keyword>
<keyword id="KW-0808">Transferase</keyword>
<keyword id="KW-0812">Transmembrane</keyword>
<keyword id="KW-1133">Transmembrane helix</keyword>
<name>MRAY_STRGC</name>
<sequence>MHTAIIAGITTFILTIIGIPAFIRFYQKARISGQQMHEDVKQHQAKAGTPTMGGTVFLLASIVASFVIALFSGNLSSNVTTILFILFLYGLVGFLDDFLKVFRRINEGLNPKQKLFLQLVGGVVFYLFFERHGGGDMLNVFGFPLELGFLYIFFVLFWLVGFSNAVNLTDGIDGLASISVVISLGAYAVIALEQKRFDLLIVIFSMIGGLLGFFGFNHKPAKIFMGDVGSLALGGMLAALSIALHQEWTLLLIGIVYVFETASVMLQVTYFKMTGGKRIFRMTPVHHHFELGGFSGRGKAWSEWKVDFLFWGIGLVASLITLAILYL</sequence>
<comment type="function">
    <text evidence="1">Catalyzes the initial step of the lipid cycle reactions in the biosynthesis of the cell wall peptidoglycan: transfers peptidoglycan precursor phospho-MurNAc-pentapeptide from UDP-MurNAc-pentapeptide onto the lipid carrier undecaprenyl phosphate, yielding undecaprenyl-pyrophosphoryl-MurNAc-pentapeptide, known as lipid I.</text>
</comment>
<comment type="catalytic activity">
    <reaction evidence="1">
        <text>UDP-N-acetyl-alpha-D-muramoyl-L-alanyl-gamma-D-glutamyl-L-lysyl-D-alanyl-D-alanine + di-trans,octa-cis-undecaprenyl phosphate = Mur2Ac(oyl-L-Ala-gamma-D-Glu-L-Lys-D-Ala-D-Ala)-di-trans,octa-cis-undecaprenyl diphosphate + UMP</text>
        <dbReference type="Rhea" id="RHEA:21920"/>
        <dbReference type="ChEBI" id="CHEBI:57865"/>
        <dbReference type="ChEBI" id="CHEBI:60032"/>
        <dbReference type="ChEBI" id="CHEBI:60392"/>
        <dbReference type="ChEBI" id="CHEBI:70758"/>
        <dbReference type="EC" id="2.7.8.13"/>
    </reaction>
</comment>
<comment type="cofactor">
    <cofactor evidence="1">
        <name>Mg(2+)</name>
        <dbReference type="ChEBI" id="CHEBI:18420"/>
    </cofactor>
</comment>
<comment type="pathway">
    <text evidence="1">Cell wall biogenesis; peptidoglycan biosynthesis.</text>
</comment>
<comment type="subcellular location">
    <subcellularLocation>
        <location evidence="1">Cell membrane</location>
        <topology evidence="1">Multi-pass membrane protein</topology>
    </subcellularLocation>
</comment>
<comment type="similarity">
    <text evidence="1">Belongs to the glycosyltransferase 4 family. MraY subfamily.</text>
</comment>
<organism>
    <name type="scientific">Streptococcus gordonii (strain Challis / ATCC 35105 / BCRC 15272 / CH1 / DL1 / V288)</name>
    <dbReference type="NCBI Taxonomy" id="467705"/>
    <lineage>
        <taxon>Bacteria</taxon>
        <taxon>Bacillati</taxon>
        <taxon>Bacillota</taxon>
        <taxon>Bacilli</taxon>
        <taxon>Lactobacillales</taxon>
        <taxon>Streptococcaceae</taxon>
        <taxon>Streptococcus</taxon>
    </lineage>
</organism>